<feature type="chain" id="PRO_0000184560" description="S-methyl-5'-thioadenosine phosphorylase">
    <location>
        <begin position="1"/>
        <end position="257"/>
    </location>
</feature>
<feature type="binding site" evidence="1">
    <location>
        <position position="10"/>
    </location>
    <ligand>
        <name>phosphate</name>
        <dbReference type="ChEBI" id="CHEBI:43474"/>
    </ligand>
</feature>
<feature type="binding site" evidence="1">
    <location>
        <begin position="50"/>
        <end position="51"/>
    </location>
    <ligand>
        <name>phosphate</name>
        <dbReference type="ChEBI" id="CHEBI:43474"/>
    </ligand>
</feature>
<feature type="binding site" evidence="1">
    <location>
        <position position="180"/>
    </location>
    <ligand>
        <name>substrate</name>
    </ligand>
</feature>
<feature type="binding site" evidence="1">
    <location>
        <position position="181"/>
    </location>
    <ligand>
        <name>phosphate</name>
        <dbReference type="ChEBI" id="CHEBI:43474"/>
    </ligand>
</feature>
<feature type="binding site" evidence="1">
    <location>
        <begin position="204"/>
        <end position="206"/>
    </location>
    <ligand>
        <name>substrate</name>
    </ligand>
</feature>
<feature type="site" description="Important for substrate specificity" evidence="1">
    <location>
        <position position="163"/>
    </location>
</feature>
<feature type="site" description="Important for substrate specificity" evidence="1">
    <location>
        <position position="215"/>
    </location>
</feature>
<comment type="function">
    <text evidence="1">Catalyzes the reversible phosphorylation of S-methyl-5'-thioadenosine (MTA) to adenine and 5-methylthioribose-1-phosphate. Involved in the breakdown of MTA, a major by-product of polyamine biosynthesis. Responsible for the first step in the methionine salvage pathway after MTA has been generated from S-adenosylmethionine. Has broad substrate specificity with 6-aminopurine nucleosides as preferred substrates.</text>
</comment>
<comment type="catalytic activity">
    <reaction evidence="1">
        <text>S-methyl-5'-thioadenosine + phosphate = 5-(methylsulfanyl)-alpha-D-ribose 1-phosphate + adenine</text>
        <dbReference type="Rhea" id="RHEA:11852"/>
        <dbReference type="ChEBI" id="CHEBI:16708"/>
        <dbReference type="ChEBI" id="CHEBI:17509"/>
        <dbReference type="ChEBI" id="CHEBI:43474"/>
        <dbReference type="ChEBI" id="CHEBI:58533"/>
        <dbReference type="EC" id="2.4.2.28"/>
    </reaction>
</comment>
<comment type="pathway">
    <text evidence="1">Amino-acid biosynthesis; L-methionine biosynthesis via salvage pathway; S-methyl-5-thio-alpha-D-ribose 1-phosphate from S-methyl-5'-thioadenosine (phosphorylase route): step 1/1.</text>
</comment>
<comment type="subunit">
    <text evidence="1">Homohexamer. Dimer of a homotrimer.</text>
</comment>
<comment type="similarity">
    <text evidence="1">Belongs to the PNP/MTAP phosphorylase family. MTAP subfamily.</text>
</comment>
<keyword id="KW-0328">Glycosyltransferase</keyword>
<keyword id="KW-0660">Purine salvage</keyword>
<keyword id="KW-0808">Transferase</keyword>
<evidence type="ECO:0000255" key="1">
    <source>
        <dbReference type="HAMAP-Rule" id="MF_01963"/>
    </source>
</evidence>
<gene>
    <name type="primary">mntP</name>
    <name type="synonym">mtaP</name>
    <name type="ordered locus">PYRAB01230</name>
    <name type="ORF">PAB2264</name>
</gene>
<proteinExistence type="inferred from homology"/>
<sequence>MPKIGIIGGSGVYGVFEPKEVVKIHTPYGRPSAPVEIGEIEGVEVAFIPRHGKYHEFPPHEVPYRANIWALYELGVERIIAINAVGSLKEEYKPGDIVIIDQFIDFTKKREYTFYNGPKVAHVSMADPFCPELRRIFIETAKELGLPVHEKGTYICIEGPRFSTRAESRMFRQFADVIGMTLVPEVNLARELGMCYVNISTVTDYDVWAEKPVNAQEVLRVMKENEEKVQKLLRKAIPKIPEERKCGCADVLKTMFV</sequence>
<name>MTAP_PYRAB</name>
<organism>
    <name type="scientific">Pyrococcus abyssi (strain GE5 / Orsay)</name>
    <dbReference type="NCBI Taxonomy" id="272844"/>
    <lineage>
        <taxon>Archaea</taxon>
        <taxon>Methanobacteriati</taxon>
        <taxon>Methanobacteriota</taxon>
        <taxon>Thermococci</taxon>
        <taxon>Thermococcales</taxon>
        <taxon>Thermococcaceae</taxon>
        <taxon>Pyrococcus</taxon>
    </lineage>
</organism>
<accession>Q9V2F1</accession>
<accession>G8ZFV8</accession>
<reference key="1">
    <citation type="journal article" date="2003" name="Mol. Microbiol.">
        <title>An integrated analysis of the genome of the hyperthermophilic archaeon Pyrococcus abyssi.</title>
        <authorList>
            <person name="Cohen G.N."/>
            <person name="Barbe V."/>
            <person name="Flament D."/>
            <person name="Galperin M."/>
            <person name="Heilig R."/>
            <person name="Lecompte O."/>
            <person name="Poch O."/>
            <person name="Prieur D."/>
            <person name="Querellou J."/>
            <person name="Ripp R."/>
            <person name="Thierry J.-C."/>
            <person name="Van der Oost J."/>
            <person name="Weissenbach J."/>
            <person name="Zivanovic Y."/>
            <person name="Forterre P."/>
        </authorList>
    </citation>
    <scope>NUCLEOTIDE SEQUENCE [LARGE SCALE GENOMIC DNA]</scope>
    <source>
        <strain>GE5 / Orsay</strain>
    </source>
</reference>
<reference key="2">
    <citation type="journal article" date="2012" name="Curr. Microbiol.">
        <title>Re-annotation of two hyperthermophilic archaea Pyrococcus abyssi GE5 and Pyrococcus furiosus DSM 3638.</title>
        <authorList>
            <person name="Gao J."/>
            <person name="Wang J."/>
        </authorList>
    </citation>
    <scope>GENOME REANNOTATION</scope>
    <source>
        <strain>GE5 / Orsay</strain>
    </source>
</reference>
<dbReference type="EC" id="2.4.2.28" evidence="1"/>
<dbReference type="EMBL" id="AJ248283">
    <property type="protein sequence ID" value="CAB49047.1"/>
    <property type="molecule type" value="Genomic_DNA"/>
</dbReference>
<dbReference type="EMBL" id="HE613800">
    <property type="protein sequence ID" value="CCE69499.1"/>
    <property type="molecule type" value="Genomic_DNA"/>
</dbReference>
<dbReference type="PIR" id="H75199">
    <property type="entry name" value="H75199"/>
</dbReference>
<dbReference type="RefSeq" id="WP_010867247.1">
    <property type="nucleotide sequence ID" value="NC_000868.1"/>
</dbReference>
<dbReference type="SMR" id="Q9V2F1"/>
<dbReference type="STRING" id="272844.PAB2264"/>
<dbReference type="KEGG" id="pab:PAB2264"/>
<dbReference type="PATRIC" id="fig|272844.11.peg.136"/>
<dbReference type="eggNOG" id="arCOG01327">
    <property type="taxonomic scope" value="Archaea"/>
</dbReference>
<dbReference type="HOGENOM" id="CLU_054456_0_2_2"/>
<dbReference type="OrthoDB" id="7681at2157"/>
<dbReference type="PhylomeDB" id="Q9V2F1"/>
<dbReference type="UniPathway" id="UPA00904">
    <property type="reaction ID" value="UER00873"/>
</dbReference>
<dbReference type="Proteomes" id="UP000000810">
    <property type="component" value="Chromosome"/>
</dbReference>
<dbReference type="Proteomes" id="UP000009139">
    <property type="component" value="Chromosome"/>
</dbReference>
<dbReference type="GO" id="GO:0005829">
    <property type="term" value="C:cytosol"/>
    <property type="evidence" value="ECO:0007669"/>
    <property type="project" value="TreeGrafter"/>
</dbReference>
<dbReference type="GO" id="GO:0017061">
    <property type="term" value="F:S-methyl-5-thioadenosine phosphorylase activity"/>
    <property type="evidence" value="ECO:0007669"/>
    <property type="project" value="UniProtKB-UniRule"/>
</dbReference>
<dbReference type="GO" id="GO:0019509">
    <property type="term" value="P:L-methionine salvage from methylthioadenosine"/>
    <property type="evidence" value="ECO:0007669"/>
    <property type="project" value="UniProtKB-UniRule"/>
</dbReference>
<dbReference type="GO" id="GO:0006166">
    <property type="term" value="P:purine ribonucleoside salvage"/>
    <property type="evidence" value="ECO:0007669"/>
    <property type="project" value="UniProtKB-KW"/>
</dbReference>
<dbReference type="CDD" id="cd09010">
    <property type="entry name" value="MTAP_SsMTAPII_like_MTIP"/>
    <property type="match status" value="1"/>
</dbReference>
<dbReference type="FunFam" id="3.40.50.1580:FF:000012">
    <property type="entry name" value="Probable 6-oxopurine nucleoside phosphorylase"/>
    <property type="match status" value="1"/>
</dbReference>
<dbReference type="Gene3D" id="3.40.50.1580">
    <property type="entry name" value="Nucleoside phosphorylase domain"/>
    <property type="match status" value="1"/>
</dbReference>
<dbReference type="HAMAP" id="MF_01963">
    <property type="entry name" value="MTAP"/>
    <property type="match status" value="1"/>
</dbReference>
<dbReference type="InterPro" id="IPR010044">
    <property type="entry name" value="MTAP"/>
</dbReference>
<dbReference type="InterPro" id="IPR000845">
    <property type="entry name" value="Nucleoside_phosphorylase_d"/>
</dbReference>
<dbReference type="InterPro" id="IPR035994">
    <property type="entry name" value="Nucleoside_phosphorylase_sf"/>
</dbReference>
<dbReference type="InterPro" id="IPR018099">
    <property type="entry name" value="Purine_phosphorylase-2_CS"/>
</dbReference>
<dbReference type="NCBIfam" id="TIGR01694">
    <property type="entry name" value="MTAP"/>
    <property type="match status" value="1"/>
</dbReference>
<dbReference type="NCBIfam" id="NF006334">
    <property type="entry name" value="PRK08564.1"/>
    <property type="match status" value="1"/>
</dbReference>
<dbReference type="NCBIfam" id="NF006599">
    <property type="entry name" value="PRK09136.1"/>
    <property type="match status" value="1"/>
</dbReference>
<dbReference type="PANTHER" id="PTHR42679">
    <property type="entry name" value="S-METHYL-5'-THIOADENOSINE PHOSPHORYLASE"/>
    <property type="match status" value="1"/>
</dbReference>
<dbReference type="PANTHER" id="PTHR42679:SF3">
    <property type="entry name" value="S-METHYL-5'-THIOADENOSINE PHOSPHORYLASE"/>
    <property type="match status" value="1"/>
</dbReference>
<dbReference type="Pfam" id="PF01048">
    <property type="entry name" value="PNP_UDP_1"/>
    <property type="match status" value="1"/>
</dbReference>
<dbReference type="SUPFAM" id="SSF53167">
    <property type="entry name" value="Purine and uridine phosphorylases"/>
    <property type="match status" value="1"/>
</dbReference>
<dbReference type="PROSITE" id="PS01240">
    <property type="entry name" value="PNP_MTAP_2"/>
    <property type="match status" value="1"/>
</dbReference>
<protein>
    <recommendedName>
        <fullName evidence="1">S-methyl-5'-thioadenosine phosphorylase</fullName>
        <ecNumber evidence="1">2.4.2.28</ecNumber>
    </recommendedName>
    <alternativeName>
        <fullName evidence="1">5'-methylthioadenosine phosphorylase</fullName>
        <shortName evidence="1">MTA phosphorylase</shortName>
        <shortName evidence="1">MTAP</shortName>
    </alternativeName>
</protein>